<feature type="signal peptide">
    <location>
        <begin position="1"/>
        <end position="22"/>
    </location>
</feature>
<feature type="chain" id="PRO_0000017929" description="Major urinary protein 3">
    <location>
        <begin position="23"/>
        <end position="184"/>
    </location>
</feature>
<feature type="glycosylation site" description="N-linked (GlcNAc...) asparagine" evidence="2">
    <location>
        <position position="66"/>
    </location>
</feature>
<feature type="disulfide bond" evidence="1">
    <location>
        <begin position="86"/>
        <end position="179"/>
    </location>
</feature>
<feature type="sequence conflict" description="In Ref. 2; AAH19965." evidence="3" ref="2">
    <original>Y</original>
    <variation>D</variation>
    <location>
        <position position="49"/>
    </location>
</feature>
<sequence>MKLLLPLLLLLCLELTLVCIHAEESSSMERNFNVEQISGYWFSIAEASYEREKIEEHGSMRAFVENITVLENSLVFKFHLIVNEECTEMTAIGEQTEKAGIYYMNYDGFNTFSILKTDYDNYIMIHLINKKDGKTFQLMELYGREPDLSLDIKEKFAKLCEEHGIIRENIIDLTNVNRCLEARE</sequence>
<gene>
    <name type="primary">Mup3</name>
</gene>
<comment type="function">
    <text>Binds pheromones that are released from drying urine of males. These pheromones affect the sexual behavior of females.</text>
</comment>
<comment type="subcellular location">
    <subcellularLocation>
        <location>Secreted</location>
    </subcellularLocation>
</comment>
<comment type="tissue specificity">
    <text>Abundant in the urine of adult male mice but absent from that of females.</text>
</comment>
<comment type="PTM">
    <text evidence="2">Glycosylated.</text>
</comment>
<comment type="similarity">
    <text evidence="3">Belongs to the calycin superfamily. Lipocalin family.</text>
</comment>
<keyword id="KW-1015">Disulfide bond</keyword>
<keyword id="KW-0325">Glycoprotein</keyword>
<keyword id="KW-0590">Pheromone-binding</keyword>
<keyword id="KW-1185">Reference proteome</keyword>
<keyword id="KW-0964">Secreted</keyword>
<keyword id="KW-0732">Signal</keyword>
<keyword id="KW-0813">Transport</keyword>
<organism>
    <name type="scientific">Mus musculus</name>
    <name type="common">Mouse</name>
    <dbReference type="NCBI Taxonomy" id="10090"/>
    <lineage>
        <taxon>Eukaryota</taxon>
        <taxon>Metazoa</taxon>
        <taxon>Chordata</taxon>
        <taxon>Craniata</taxon>
        <taxon>Vertebrata</taxon>
        <taxon>Euteleostomi</taxon>
        <taxon>Mammalia</taxon>
        <taxon>Eutheria</taxon>
        <taxon>Euarchontoglires</taxon>
        <taxon>Glires</taxon>
        <taxon>Rodentia</taxon>
        <taxon>Myomorpha</taxon>
        <taxon>Muroidea</taxon>
        <taxon>Muridae</taxon>
        <taxon>Murinae</taxon>
        <taxon>Mus</taxon>
        <taxon>Mus</taxon>
    </lineage>
</organism>
<reference key="1">
    <citation type="journal article" date="1985" name="EMBO J.">
        <title>Analysis of mouse major urinary protein genes: variation between the exonic sequences of group 1 genes and a comparison with an active gene out with group 1 both suggest that gene conversion has occurred between MUP genes.</title>
        <authorList>
            <person name="Clark A.J."/>
            <person name="Chave-Cox A."/>
            <person name="Ma X."/>
            <person name="Bishop J.O."/>
        </authorList>
    </citation>
    <scope>NUCLEOTIDE SEQUENCE [MRNA]</scope>
    <source>
        <strain>BALB/cJ</strain>
        <tissue>Liver</tissue>
    </source>
</reference>
<reference key="2">
    <citation type="journal article" date="2004" name="Genome Res.">
        <title>The status, quality, and expansion of the NIH full-length cDNA project: the Mammalian Gene Collection (MGC).</title>
        <authorList>
            <consortium name="The MGC Project Team"/>
        </authorList>
    </citation>
    <scope>NUCLEOTIDE SEQUENCE [LARGE SCALE MRNA]</scope>
    <source>
        <tissue>Liver</tissue>
    </source>
</reference>
<reference key="3">
    <citation type="journal article" date="1987" name="Mol. Cell. Biol.">
        <title>Nucleotide sequences of liver, lachrymal, and submaxillary gland mouse major urinary protein mRNAs: mosaic structure and construction of panels of gene-specific synthetic oligonucleotide probes.</title>
        <authorList>
            <person name="Shahan K."/>
            <person name="Gilmartin M."/>
            <person name="Derman E."/>
        </authorList>
    </citation>
    <scope>NUCLEOTIDE SEQUENCE [MRNA] OF 72-184</scope>
</reference>
<reference key="4">
    <citation type="journal article" date="2006" name="J. Proteome Res.">
        <title>Proteome-wide characterization of N-glycosylation events by diagonal chromatography.</title>
        <authorList>
            <person name="Ghesquiere B."/>
            <person name="Van Damme J."/>
            <person name="Martens L."/>
            <person name="Vandekerckhove J."/>
            <person name="Gevaert K."/>
        </authorList>
    </citation>
    <scope>GLYCOSYLATION [LARGE SCALE ANALYSIS] AT ASN-66</scope>
    <source>
        <strain>C57BL/6J</strain>
        <tissue>Plasma</tissue>
    </source>
</reference>
<reference key="5">
    <citation type="journal article" date="2010" name="Cell">
        <title>A tissue-specific atlas of mouse protein phosphorylation and expression.</title>
        <authorList>
            <person name="Huttlin E.L."/>
            <person name="Jedrychowski M.P."/>
            <person name="Elias J.E."/>
            <person name="Goswami T."/>
            <person name="Rad R."/>
            <person name="Beausoleil S.A."/>
            <person name="Villen J."/>
            <person name="Haas W."/>
            <person name="Sowa M.E."/>
            <person name="Gygi S.P."/>
        </authorList>
    </citation>
    <scope>IDENTIFICATION BY MASS SPECTROMETRY [LARGE SCALE ANALYSIS]</scope>
    <source>
        <tissue>Liver</tissue>
    </source>
</reference>
<dbReference type="EMBL" id="X03525">
    <property type="protein sequence ID" value="CAA27228.1"/>
    <property type="molecule type" value="mRNA"/>
</dbReference>
<dbReference type="EMBL" id="M27608">
    <property type="protein sequence ID" value="AAA39766.1"/>
    <property type="molecule type" value="mRNA"/>
</dbReference>
<dbReference type="EMBL" id="BC019965">
    <property type="protein sequence ID" value="AAH19965.1"/>
    <property type="molecule type" value="mRNA"/>
</dbReference>
<dbReference type="EMBL" id="M16359">
    <property type="protein sequence ID" value="AAA39762.1"/>
    <property type="molecule type" value="mRNA"/>
</dbReference>
<dbReference type="EMBL" id="M16357">
    <property type="protein sequence ID" value="AAA39761.1"/>
    <property type="molecule type" value="mRNA"/>
</dbReference>
<dbReference type="CCDS" id="CCDS18234.1"/>
<dbReference type="PIR" id="S10125">
    <property type="entry name" value="S10125"/>
</dbReference>
<dbReference type="RefSeq" id="NP_001034633.1">
    <property type="nucleotide sequence ID" value="NM_001039544.1"/>
</dbReference>
<dbReference type="SMR" id="P04939"/>
<dbReference type="FunCoup" id="P04939">
    <property type="interactions" value="309"/>
</dbReference>
<dbReference type="STRING" id="10090.ENSMUSP00000103112"/>
<dbReference type="Allergome" id="478">
    <property type="allergen name" value="Mus m 1"/>
</dbReference>
<dbReference type="GlyCosmos" id="P04939">
    <property type="glycosylation" value="1 site, No reported glycans"/>
</dbReference>
<dbReference type="GlyGen" id="P04939">
    <property type="glycosylation" value="1 site, 1 N-linked glycan (1 site)"/>
</dbReference>
<dbReference type="iPTMnet" id="P04939"/>
<dbReference type="PhosphoSitePlus" id="P04939"/>
<dbReference type="SwissPalm" id="P04939"/>
<dbReference type="jPOST" id="P04939"/>
<dbReference type="PaxDb" id="10090-ENSMUSP00000081579"/>
<dbReference type="PeptideAtlas" id="P04939"/>
<dbReference type="ProteomicsDB" id="287641"/>
<dbReference type="DNASU" id="17842"/>
<dbReference type="GeneID" id="17842"/>
<dbReference type="KEGG" id="mmu:17842"/>
<dbReference type="AGR" id="MGI:97235"/>
<dbReference type="CTD" id="17842"/>
<dbReference type="MGI" id="MGI:97235">
    <property type="gene designation" value="Mup3"/>
</dbReference>
<dbReference type="eggNOG" id="ENOG502S6GK">
    <property type="taxonomic scope" value="Eukaryota"/>
</dbReference>
<dbReference type="InParanoid" id="P04939"/>
<dbReference type="OrthoDB" id="9048943at2759"/>
<dbReference type="PhylomeDB" id="P04939"/>
<dbReference type="BioGRID-ORCS" id="17842">
    <property type="hits" value="1 hit in 56 CRISPR screens"/>
</dbReference>
<dbReference type="ChiTaRS" id="Mup3">
    <property type="organism name" value="mouse"/>
</dbReference>
<dbReference type="PRO" id="PR:P04939"/>
<dbReference type="Proteomes" id="UP000000589">
    <property type="component" value="Unplaced"/>
</dbReference>
<dbReference type="RNAct" id="P04939">
    <property type="molecule type" value="protein"/>
</dbReference>
<dbReference type="GO" id="GO:0005829">
    <property type="term" value="C:cytosol"/>
    <property type="evidence" value="ECO:0000250"/>
    <property type="project" value="UniProtKB"/>
</dbReference>
<dbReference type="GO" id="GO:0005615">
    <property type="term" value="C:extracellular space"/>
    <property type="evidence" value="ECO:0000314"/>
    <property type="project" value="MGI"/>
</dbReference>
<dbReference type="GO" id="GO:0005634">
    <property type="term" value="C:nucleus"/>
    <property type="evidence" value="ECO:0000250"/>
    <property type="project" value="UniProtKB"/>
</dbReference>
<dbReference type="GO" id="GO:0005009">
    <property type="term" value="F:insulin receptor activity"/>
    <property type="evidence" value="ECO:0000250"/>
    <property type="project" value="UniProtKB"/>
</dbReference>
<dbReference type="GO" id="GO:0005550">
    <property type="term" value="F:pheromone binding"/>
    <property type="evidence" value="ECO:0000250"/>
    <property type="project" value="UniProtKB"/>
</dbReference>
<dbReference type="GO" id="GO:0036094">
    <property type="term" value="F:small molecule binding"/>
    <property type="evidence" value="ECO:0007669"/>
    <property type="project" value="InterPro"/>
</dbReference>
<dbReference type="GO" id="GO:0009060">
    <property type="term" value="P:aerobic respiration"/>
    <property type="evidence" value="ECO:0000250"/>
    <property type="project" value="UniProtKB"/>
</dbReference>
<dbReference type="GO" id="GO:0071396">
    <property type="term" value="P:cellular response to lipid"/>
    <property type="evidence" value="ECO:0000250"/>
    <property type="project" value="UniProtKB"/>
</dbReference>
<dbReference type="GO" id="GO:0006112">
    <property type="term" value="P:energy reserve metabolic process"/>
    <property type="evidence" value="ECO:0000250"/>
    <property type="project" value="UniProtKB"/>
</dbReference>
<dbReference type="GO" id="GO:0042593">
    <property type="term" value="P:glucose homeostasis"/>
    <property type="evidence" value="ECO:0000250"/>
    <property type="project" value="UniProtKB"/>
</dbReference>
<dbReference type="GO" id="GO:0031649">
    <property type="term" value="P:heat generation"/>
    <property type="evidence" value="ECO:0000250"/>
    <property type="project" value="UniProtKB"/>
</dbReference>
<dbReference type="GO" id="GO:0045475">
    <property type="term" value="P:locomotor rhythm"/>
    <property type="evidence" value="ECO:0000250"/>
    <property type="project" value="UniProtKB"/>
</dbReference>
<dbReference type="GO" id="GO:0007005">
    <property type="term" value="P:mitochondrion organization"/>
    <property type="evidence" value="ECO:0000250"/>
    <property type="project" value="UniProtKB"/>
</dbReference>
<dbReference type="GO" id="GO:0045892">
    <property type="term" value="P:negative regulation of DNA-templated transcription"/>
    <property type="evidence" value="ECO:0000250"/>
    <property type="project" value="UniProtKB"/>
</dbReference>
<dbReference type="GO" id="GO:0045721">
    <property type="term" value="P:negative regulation of gluconeogenesis"/>
    <property type="evidence" value="ECO:0000250"/>
    <property type="project" value="UniProtKB"/>
</dbReference>
<dbReference type="GO" id="GO:0061179">
    <property type="term" value="P:negative regulation of insulin secretion involved in cellular response to glucose stimulus"/>
    <property type="evidence" value="ECO:0000250"/>
    <property type="project" value="UniProtKB"/>
</dbReference>
<dbReference type="GO" id="GO:0051055">
    <property type="term" value="P:negative regulation of lipid biosynthetic process"/>
    <property type="evidence" value="ECO:0000250"/>
    <property type="project" value="UniProtKB"/>
</dbReference>
<dbReference type="GO" id="GO:0010888">
    <property type="term" value="P:negative regulation of lipid storage"/>
    <property type="evidence" value="ECO:0000250"/>
    <property type="project" value="UniProtKB"/>
</dbReference>
<dbReference type="GO" id="GO:0010628">
    <property type="term" value="P:positive regulation of gene expression"/>
    <property type="evidence" value="ECO:0000250"/>
    <property type="project" value="UniProtKB"/>
</dbReference>
<dbReference type="GO" id="GO:0010907">
    <property type="term" value="P:positive regulation of glucose metabolic process"/>
    <property type="evidence" value="ECO:0000250"/>
    <property type="project" value="UniProtKB"/>
</dbReference>
<dbReference type="GO" id="GO:0045834">
    <property type="term" value="P:positive regulation of lipid metabolic process"/>
    <property type="evidence" value="ECO:0000250"/>
    <property type="project" value="UniProtKB"/>
</dbReference>
<dbReference type="GO" id="GO:0051897">
    <property type="term" value="P:positive regulation of phosphatidylinositol 3-kinase/protein kinase B signal transduction"/>
    <property type="evidence" value="ECO:0000250"/>
    <property type="project" value="UniProtKB"/>
</dbReference>
<dbReference type="GO" id="GO:0035634">
    <property type="term" value="P:response to stilbenoid"/>
    <property type="evidence" value="ECO:0000270"/>
    <property type="project" value="UniProtKB"/>
</dbReference>
<dbReference type="FunFam" id="2.40.128.20:FF:000008">
    <property type="entry name" value="Major urinary protein"/>
    <property type="match status" value="1"/>
</dbReference>
<dbReference type="Gene3D" id="2.40.128.20">
    <property type="match status" value="1"/>
</dbReference>
<dbReference type="InterPro" id="IPR012674">
    <property type="entry name" value="Calycin"/>
</dbReference>
<dbReference type="InterPro" id="IPR002345">
    <property type="entry name" value="Lipocalin"/>
</dbReference>
<dbReference type="InterPro" id="IPR022272">
    <property type="entry name" value="Lipocalin_CS"/>
</dbReference>
<dbReference type="InterPro" id="IPR000566">
    <property type="entry name" value="Lipocln_cytosolic_FA-bd_dom"/>
</dbReference>
<dbReference type="InterPro" id="IPR002971">
    <property type="entry name" value="Maj_urinary"/>
</dbReference>
<dbReference type="PANTHER" id="PTHR11430">
    <property type="entry name" value="LIPOCALIN"/>
    <property type="match status" value="1"/>
</dbReference>
<dbReference type="PANTHER" id="PTHR11430:SF76">
    <property type="entry name" value="MAJOR URINARY PROTEIN 1-RELATED"/>
    <property type="match status" value="1"/>
</dbReference>
<dbReference type="Pfam" id="PF00061">
    <property type="entry name" value="Lipocalin"/>
    <property type="match status" value="1"/>
</dbReference>
<dbReference type="PRINTS" id="PR00179">
    <property type="entry name" value="LIPOCALIN"/>
</dbReference>
<dbReference type="PRINTS" id="PR01221">
    <property type="entry name" value="MAJORURINARY"/>
</dbReference>
<dbReference type="SUPFAM" id="SSF50814">
    <property type="entry name" value="Lipocalins"/>
    <property type="match status" value="1"/>
</dbReference>
<dbReference type="PROSITE" id="PS00213">
    <property type="entry name" value="LIPOCALIN"/>
    <property type="match status" value="1"/>
</dbReference>
<accession>P04939</accession>
<accession>P97897</accession>
<accession>Q8VCG6</accession>
<name>MUP3_MOUSE</name>
<proteinExistence type="evidence at protein level"/>
<protein>
    <recommendedName>
        <fullName>Major urinary protein 3</fullName>
        <shortName>MUP 3</shortName>
    </recommendedName>
    <alternativeName>
        <fullName>Non-group 1/group 2 MUP15</fullName>
    </alternativeName>
</protein>
<evidence type="ECO:0000250" key="1"/>
<evidence type="ECO:0000269" key="2">
    <source>
    </source>
</evidence>
<evidence type="ECO:0000305" key="3"/>